<dbReference type="EMBL" id="AC005287">
    <property type="status" value="NOT_ANNOTATED_CDS"/>
    <property type="molecule type" value="Genomic_DNA"/>
</dbReference>
<dbReference type="EMBL" id="CP002684">
    <property type="protein sequence ID" value="AEE33104.1"/>
    <property type="molecule type" value="Genomic_DNA"/>
</dbReference>
<dbReference type="RefSeq" id="NP_001319225.1">
    <property type="nucleotide sequence ID" value="NM_001333650.1"/>
</dbReference>
<dbReference type="BioGRID" id="527813">
    <property type="interactions" value="1"/>
</dbReference>
<dbReference type="STRING" id="3702.Q2V4G9"/>
<dbReference type="PaxDb" id="3702-AT1G54445.1"/>
<dbReference type="ProteomicsDB" id="224693"/>
<dbReference type="EnsemblPlants" id="AT1G54445.1">
    <property type="protein sequence ID" value="AT1G54445.1"/>
    <property type="gene ID" value="AT1G54445"/>
</dbReference>
<dbReference type="GeneID" id="3767452"/>
<dbReference type="Gramene" id="AT1G54445.1">
    <property type="protein sequence ID" value="AT1G54445.1"/>
    <property type="gene ID" value="AT1G54445"/>
</dbReference>
<dbReference type="KEGG" id="ath:AT1G54445"/>
<dbReference type="Araport" id="AT1G54445"/>
<dbReference type="TAIR" id="AT1G54445"/>
<dbReference type="HOGENOM" id="CLU_180308_2_0_1"/>
<dbReference type="InParanoid" id="Q2V4G9"/>
<dbReference type="OMA" id="CCECTSK"/>
<dbReference type="OrthoDB" id="1034495at2759"/>
<dbReference type="PhylomeDB" id="Q2V4G9"/>
<dbReference type="PRO" id="PR:Q2V4G9"/>
<dbReference type="Proteomes" id="UP000006548">
    <property type="component" value="Chromosome 1"/>
</dbReference>
<dbReference type="ExpressionAtlas" id="Q2V4G9">
    <property type="expression patterns" value="baseline"/>
</dbReference>
<dbReference type="GO" id="GO:0005576">
    <property type="term" value="C:extracellular region"/>
    <property type="evidence" value="ECO:0007669"/>
    <property type="project" value="UniProtKB-SubCell"/>
</dbReference>
<dbReference type="GO" id="GO:0050832">
    <property type="term" value="P:defense response to fungus"/>
    <property type="evidence" value="ECO:0007669"/>
    <property type="project" value="UniProtKB-KW"/>
</dbReference>
<dbReference type="GO" id="GO:0031640">
    <property type="term" value="P:killing of cells of another organism"/>
    <property type="evidence" value="ECO:0007669"/>
    <property type="project" value="UniProtKB-KW"/>
</dbReference>
<evidence type="ECO:0000250" key="1"/>
<evidence type="ECO:0000255" key="2"/>
<evidence type="ECO:0000305" key="3"/>
<organism>
    <name type="scientific">Arabidopsis thaliana</name>
    <name type="common">Mouse-ear cress</name>
    <dbReference type="NCBI Taxonomy" id="3702"/>
    <lineage>
        <taxon>Eukaryota</taxon>
        <taxon>Viridiplantae</taxon>
        <taxon>Streptophyta</taxon>
        <taxon>Embryophyta</taxon>
        <taxon>Tracheophyta</taxon>
        <taxon>Spermatophyta</taxon>
        <taxon>Magnoliopsida</taxon>
        <taxon>eudicotyledons</taxon>
        <taxon>Gunneridae</taxon>
        <taxon>Pentapetalae</taxon>
        <taxon>rosids</taxon>
        <taxon>malvids</taxon>
        <taxon>Brassicales</taxon>
        <taxon>Brassicaceae</taxon>
        <taxon>Camelineae</taxon>
        <taxon>Arabidopsis</taxon>
    </lineage>
</organism>
<keyword id="KW-0929">Antimicrobial</keyword>
<keyword id="KW-1015">Disulfide bond</keyword>
<keyword id="KW-0295">Fungicide</keyword>
<keyword id="KW-0611">Plant defense</keyword>
<keyword id="KW-1185">Reference proteome</keyword>
<keyword id="KW-0964">Secreted</keyword>
<keyword id="KW-0732">Signal</keyword>
<protein>
    <recommendedName>
        <fullName>Defensin-like protein 90</fullName>
    </recommendedName>
</protein>
<sequence length="78" mass="8725">MTTKMFSYVLLHSLMMFAIILSSMGSPEKYYDCKQDGCITTPPCWRKCVSMGYPKGGECRIYSYGGVCCCDLTSKPPN</sequence>
<accession>Q2V4G9</accession>
<comment type="subcellular location">
    <subcellularLocation>
        <location evidence="1">Secreted</location>
    </subcellularLocation>
</comment>
<comment type="similarity">
    <text evidence="3">Belongs to the DEFL family.</text>
</comment>
<name>DEF90_ARATH</name>
<gene>
    <name type="ordered locus">At1g54445</name>
    <name type="ORF">F20D21</name>
</gene>
<reference key="1">
    <citation type="journal article" date="2000" name="Nature">
        <title>Sequence and analysis of chromosome 1 of the plant Arabidopsis thaliana.</title>
        <authorList>
            <person name="Theologis A."/>
            <person name="Ecker J.R."/>
            <person name="Palm C.J."/>
            <person name="Federspiel N.A."/>
            <person name="Kaul S."/>
            <person name="White O."/>
            <person name="Alonso J."/>
            <person name="Altafi H."/>
            <person name="Araujo R."/>
            <person name="Bowman C.L."/>
            <person name="Brooks S.Y."/>
            <person name="Buehler E."/>
            <person name="Chan A."/>
            <person name="Chao Q."/>
            <person name="Chen H."/>
            <person name="Cheuk R.F."/>
            <person name="Chin C.W."/>
            <person name="Chung M.K."/>
            <person name="Conn L."/>
            <person name="Conway A.B."/>
            <person name="Conway A.R."/>
            <person name="Creasy T.H."/>
            <person name="Dewar K."/>
            <person name="Dunn P."/>
            <person name="Etgu P."/>
            <person name="Feldblyum T.V."/>
            <person name="Feng J.-D."/>
            <person name="Fong B."/>
            <person name="Fujii C.Y."/>
            <person name="Gill J.E."/>
            <person name="Goldsmith A.D."/>
            <person name="Haas B."/>
            <person name="Hansen N.F."/>
            <person name="Hughes B."/>
            <person name="Huizar L."/>
            <person name="Hunter J.L."/>
            <person name="Jenkins J."/>
            <person name="Johnson-Hopson C."/>
            <person name="Khan S."/>
            <person name="Khaykin E."/>
            <person name="Kim C.J."/>
            <person name="Koo H.L."/>
            <person name="Kremenetskaia I."/>
            <person name="Kurtz D.B."/>
            <person name="Kwan A."/>
            <person name="Lam B."/>
            <person name="Langin-Hooper S."/>
            <person name="Lee A."/>
            <person name="Lee J.M."/>
            <person name="Lenz C.A."/>
            <person name="Li J.H."/>
            <person name="Li Y.-P."/>
            <person name="Lin X."/>
            <person name="Liu S.X."/>
            <person name="Liu Z.A."/>
            <person name="Luros J.S."/>
            <person name="Maiti R."/>
            <person name="Marziali A."/>
            <person name="Militscher J."/>
            <person name="Miranda M."/>
            <person name="Nguyen M."/>
            <person name="Nierman W.C."/>
            <person name="Osborne B.I."/>
            <person name="Pai G."/>
            <person name="Peterson J."/>
            <person name="Pham P.K."/>
            <person name="Rizzo M."/>
            <person name="Rooney T."/>
            <person name="Rowley D."/>
            <person name="Sakano H."/>
            <person name="Salzberg S.L."/>
            <person name="Schwartz J.R."/>
            <person name="Shinn P."/>
            <person name="Southwick A.M."/>
            <person name="Sun H."/>
            <person name="Tallon L.J."/>
            <person name="Tambunga G."/>
            <person name="Toriumi M.J."/>
            <person name="Town C.D."/>
            <person name="Utterback T."/>
            <person name="Van Aken S."/>
            <person name="Vaysberg M."/>
            <person name="Vysotskaia V.S."/>
            <person name="Walker M."/>
            <person name="Wu D."/>
            <person name="Yu G."/>
            <person name="Fraser C.M."/>
            <person name="Venter J.C."/>
            <person name="Davis R.W."/>
        </authorList>
    </citation>
    <scope>NUCLEOTIDE SEQUENCE [LARGE SCALE GENOMIC DNA]</scope>
    <source>
        <strain>cv. Columbia</strain>
    </source>
</reference>
<reference key="2">
    <citation type="journal article" date="2017" name="Plant J.">
        <title>Araport11: a complete reannotation of the Arabidopsis thaliana reference genome.</title>
        <authorList>
            <person name="Cheng C.Y."/>
            <person name="Krishnakumar V."/>
            <person name="Chan A.P."/>
            <person name="Thibaud-Nissen F."/>
            <person name="Schobel S."/>
            <person name="Town C.D."/>
        </authorList>
    </citation>
    <scope>GENOME REANNOTATION</scope>
    <source>
        <strain>cv. Columbia</strain>
    </source>
</reference>
<reference key="3">
    <citation type="journal article" date="2005" name="Plant Physiol.">
        <title>Genome organization of more than 300 defensin-like genes in Arabidopsis.</title>
        <authorList>
            <person name="Silverstein K.A.T."/>
            <person name="Graham M.A."/>
            <person name="Paape T.D."/>
            <person name="VandenBosch K.A."/>
        </authorList>
    </citation>
    <scope>GENE FAMILY</scope>
</reference>
<feature type="signal peptide" evidence="2">
    <location>
        <begin position="1"/>
        <end position="25"/>
    </location>
</feature>
<feature type="chain" id="PRO_0000379658" description="Defensin-like protein 90">
    <location>
        <begin position="26"/>
        <end position="78"/>
    </location>
</feature>
<feature type="disulfide bond" evidence="1">
    <location>
        <begin position="33"/>
        <end position="70"/>
    </location>
</feature>
<feature type="disulfide bond" evidence="1">
    <location>
        <begin position="38"/>
        <end position="59"/>
    </location>
</feature>
<feature type="disulfide bond" evidence="1">
    <location>
        <begin position="44"/>
        <end position="68"/>
    </location>
</feature>
<feature type="disulfide bond" evidence="1">
    <location>
        <begin position="48"/>
        <end position="69"/>
    </location>
</feature>
<proteinExistence type="evidence at transcript level"/>